<organism>
    <name type="scientific">Streptomyces rubellomurinus (strain ATCC 31215)</name>
    <dbReference type="NCBI Taxonomy" id="359131"/>
    <lineage>
        <taxon>Bacteria</taxon>
        <taxon>Bacillati</taxon>
        <taxon>Actinomycetota</taxon>
        <taxon>Actinomycetes</taxon>
        <taxon>Kitasatosporales</taxon>
        <taxon>Streptomycetaceae</taxon>
        <taxon>Streptomyces</taxon>
    </lineage>
</organism>
<accession>Q0ZQ39</accession>
<accession>A0A0F2TCR0</accession>
<protein>
    <recommendedName>
        <fullName evidence="4">FR-33289 synthase</fullName>
        <ecNumber evidence="1">1.14.11.-</ecNumber>
    </recommendedName>
</protein>
<feature type="chain" id="PRO_0000460445" description="FR-33289 synthase">
    <location>
        <begin position="1"/>
        <end position="339"/>
    </location>
</feature>
<feature type="binding site" evidence="5 7">
    <location>
        <position position="150"/>
    </location>
    <ligand>
        <name>Fe(2+)</name>
        <dbReference type="ChEBI" id="CHEBI:29033"/>
    </ligand>
</feature>
<feature type="binding site" evidence="5 7">
    <location>
        <position position="152"/>
    </location>
    <ligand>
        <name>Fe(2+)</name>
        <dbReference type="ChEBI" id="CHEBI:29033"/>
    </ligand>
</feature>
<feature type="binding site" evidence="5 7">
    <location>
        <position position="288"/>
    </location>
    <ligand>
        <name>Fe(2+)</name>
        <dbReference type="ChEBI" id="CHEBI:29033"/>
    </ligand>
</feature>
<feature type="helix" evidence="8">
    <location>
        <begin position="17"/>
        <end position="20"/>
    </location>
</feature>
<feature type="helix" evidence="8">
    <location>
        <begin position="23"/>
        <end position="25"/>
    </location>
</feature>
<feature type="strand" evidence="8">
    <location>
        <begin position="27"/>
        <end position="29"/>
    </location>
</feature>
<feature type="helix" evidence="8">
    <location>
        <begin position="32"/>
        <end position="47"/>
    </location>
</feature>
<feature type="helix" evidence="8">
    <location>
        <begin position="52"/>
        <end position="54"/>
    </location>
</feature>
<feature type="turn" evidence="8">
    <location>
        <begin position="57"/>
        <end position="59"/>
    </location>
</feature>
<feature type="helix" evidence="8">
    <location>
        <begin position="65"/>
        <end position="78"/>
    </location>
</feature>
<feature type="strand" evidence="8">
    <location>
        <begin position="79"/>
        <end position="86"/>
    </location>
</feature>
<feature type="helix" evidence="8">
    <location>
        <begin position="95"/>
        <end position="107"/>
    </location>
</feature>
<feature type="strand" evidence="8">
    <location>
        <begin position="121"/>
        <end position="125"/>
    </location>
</feature>
<feature type="strand" evidence="8">
    <location>
        <begin position="153"/>
        <end position="162"/>
    </location>
</feature>
<feature type="strand" evidence="8">
    <location>
        <begin position="171"/>
        <end position="175"/>
    </location>
</feature>
<feature type="helix" evidence="8">
    <location>
        <begin position="176"/>
        <end position="186"/>
    </location>
</feature>
<feature type="helix" evidence="8">
    <location>
        <begin position="188"/>
        <end position="190"/>
    </location>
</feature>
<feature type="helix" evidence="8">
    <location>
        <begin position="191"/>
        <end position="196"/>
    </location>
</feature>
<feature type="strand" evidence="8">
    <location>
        <begin position="198"/>
        <end position="201"/>
    </location>
</feature>
<feature type="strand" evidence="8">
    <location>
        <begin position="212"/>
        <end position="216"/>
    </location>
</feature>
<feature type="strand" evidence="8">
    <location>
        <begin position="218"/>
        <end position="222"/>
    </location>
</feature>
<feature type="strand" evidence="8">
    <location>
        <begin position="225"/>
        <end position="228"/>
    </location>
</feature>
<feature type="helix" evidence="8">
    <location>
        <begin position="233"/>
        <end position="242"/>
    </location>
</feature>
<feature type="helix" evidence="8">
    <location>
        <begin position="249"/>
        <end position="263"/>
    </location>
</feature>
<feature type="helix" evidence="8">
    <location>
        <begin position="265"/>
        <end position="267"/>
    </location>
</feature>
<feature type="strand" evidence="8">
    <location>
        <begin position="268"/>
        <end position="271"/>
    </location>
</feature>
<feature type="strand" evidence="8">
    <location>
        <begin position="278"/>
        <end position="282"/>
    </location>
</feature>
<feature type="turn" evidence="8">
    <location>
        <begin position="283"/>
        <end position="285"/>
    </location>
</feature>
<feature type="strand" evidence="8">
    <location>
        <begin position="286"/>
        <end position="289"/>
    </location>
</feature>
<feature type="strand" evidence="8">
    <location>
        <begin position="307"/>
        <end position="313"/>
    </location>
</feature>
<reference key="1">
    <citation type="journal article" date="2008" name="Chem. Biol.">
        <title>Cloning, expression, and biochemical characterization of Streptomyces rubellomurinus genes required for biosynthesis of antimalarial compound FR900098.</title>
        <authorList>
            <person name="Eliot A.C."/>
            <person name="Griffin B.M."/>
            <person name="Thomas P.M."/>
            <person name="Johannes T.W."/>
            <person name="Kelleher N.L."/>
            <person name="Zhao H."/>
            <person name="Metcalf W.W."/>
        </authorList>
    </citation>
    <scope>NUCLEOTIDE SEQUENCE [GENOMIC DNA]</scope>
    <source>
        <strain>ATCC 31215</strain>
    </source>
</reference>
<reference key="2">
    <citation type="submission" date="2015-02" db="EMBL/GenBank/DDBJ databases">
        <authorList>
            <person name="Ju K.-S."/>
            <person name="Doroghazi J.R."/>
            <person name="Metcalf W."/>
        </authorList>
    </citation>
    <scope>NUCLEOTIDE SEQUENCE [LARGE SCALE GENOMIC DNA]</scope>
    <source>
        <strain>ATCC 31215</strain>
    </source>
</reference>
<reference key="3">
    <citation type="journal article" date="2010" name="Chem. Biol.">
        <title>Deciphering the late biosynthetic steps of antimalarial compound FR-900098.</title>
        <authorList>
            <person name="Johannes T.W."/>
            <person name="DeSieno M.A."/>
            <person name="Griffin B.M."/>
            <person name="Thomas P.M."/>
            <person name="Kelleher N.L."/>
            <person name="Metcalf W.W."/>
            <person name="Zhao H."/>
        </authorList>
    </citation>
    <scope>FUNCTION</scope>
    <scope>CATALYTIC ACTIVITY</scope>
    <scope>COFACTOR</scope>
    <scope>PATHWAY</scope>
    <source>
        <strain>ATCC 31215</strain>
    </source>
</reference>
<reference evidence="7" key="4">
    <citation type="journal article" date="2016" name="Acta Crystallogr. F Struct. Biol. Commun.">
        <title>Structural analysis of a phosphonate hydroxylase with an access tunnel at the back of the active site.</title>
        <authorList>
            <person name="Li C."/>
            <person name="Junaid M."/>
            <person name="Almuqri E.A."/>
            <person name="Hao S."/>
            <person name="Zhang H."/>
        </authorList>
    </citation>
    <scope>X-RAY CRYSTALLOGRAPHY (2.30 ANGSTROMS) OF 2-339 IN COMPLEX WITH MG(2+)</scope>
    <scope>SUBUNIT</scope>
    <scope>DOMAIN</scope>
</reference>
<proteinExistence type="evidence at protein level"/>
<gene>
    <name evidence="3" type="primary">frbJ</name>
    <name evidence="6" type="ORF">VM95_23240</name>
</gene>
<comment type="function">
    <text evidence="1">Monooxygenase involved in the biosynthesis of the phosphonate antibiotic FR-33289, an antimalarial agent (PubMed:20142041). Catalyzes the oxidative decarboxylation of the antibiotic FR-900098 (3-(N-acetyl-N-hydroxy)aminopropylphosphonate) to form FR-33289 ((R)-(3-(acetylhydroxyamino)-2-hydroxypropyl)phosphonate) (PubMed:20142041).</text>
</comment>
<comment type="catalytic activity">
    <reaction evidence="1">
        <text>3-(N-acetyl-N-hydroxy)aminopropylphosphonate + 2-oxoglutarate + O2 = (R)-(3-(acetylhydroxyamino)-2-hydroxypropyl)phosphonate + succinate + CO2</text>
        <dbReference type="Rhea" id="RHEA:78503"/>
        <dbReference type="ChEBI" id="CHEBI:15379"/>
        <dbReference type="ChEBI" id="CHEBI:16526"/>
        <dbReference type="ChEBI" id="CHEBI:16810"/>
        <dbReference type="ChEBI" id="CHEBI:30031"/>
        <dbReference type="ChEBI" id="CHEBI:229209"/>
        <dbReference type="ChEBI" id="CHEBI:229210"/>
    </reaction>
    <physiologicalReaction direction="left-to-right" evidence="1">
        <dbReference type="Rhea" id="RHEA:78504"/>
    </physiologicalReaction>
</comment>
<comment type="cofactor">
    <cofactor evidence="1">
        <name>Fe(2+)</name>
        <dbReference type="ChEBI" id="CHEBI:29033"/>
    </cofactor>
    <text evidence="5">Binds 1 Fe(2+) ion per subunit.</text>
</comment>
<comment type="pathway">
    <text evidence="1">Antibiotic biosynthesis.</text>
</comment>
<comment type="subunit">
    <text evidence="2">Homodimer.</text>
</comment>
<comment type="domain">
    <text evidence="2">Has a jellyroll core motif at the center and helical bundle motifs at the periphery and an unusual lid structure which consists of two beta-strands with a long loop between them (PubMed:27139827). An access tunnel is found at the back of the active site which connects the putative binding site of 2-oxoglutarate to the solvent outside (PubMed:27139827).</text>
</comment>
<comment type="similarity">
    <text evidence="4">Belongs to the TfdA dioxygenase family.</text>
</comment>
<comment type="sequence caution" evidence="4">
    <conflict type="erroneous initiation">
        <sequence resource="EMBL-CDS" id="KJS60110"/>
    </conflict>
    <text>Truncated N-terminus.</text>
</comment>
<dbReference type="EC" id="1.14.11.-" evidence="1"/>
<dbReference type="EMBL" id="DQ267750">
    <property type="protein sequence ID" value="ABB90399.1"/>
    <property type="molecule type" value="Genomic_DNA"/>
</dbReference>
<dbReference type="EMBL" id="JZKH01000051">
    <property type="protein sequence ID" value="KJS60110.1"/>
    <property type="status" value="ALT_INIT"/>
    <property type="molecule type" value="Genomic_DNA"/>
</dbReference>
<dbReference type="PDB" id="5EQN">
    <property type="method" value="X-ray"/>
    <property type="resolution" value="2.30 A"/>
    <property type="chains" value="A/B=2-339"/>
</dbReference>
<dbReference type="PDBsum" id="5EQN"/>
<dbReference type="SMR" id="Q0ZQ39"/>
<dbReference type="PATRIC" id="fig|359131.3.peg.5655"/>
<dbReference type="OrthoDB" id="5491415at2"/>
<dbReference type="BioCyc" id="MetaCyc:MONOMER-18404"/>
<dbReference type="Proteomes" id="UP000033699">
    <property type="component" value="Unassembled WGS sequence"/>
</dbReference>
<dbReference type="GO" id="GO:0046872">
    <property type="term" value="F:metal ion binding"/>
    <property type="evidence" value="ECO:0007669"/>
    <property type="project" value="UniProtKB-KW"/>
</dbReference>
<dbReference type="GO" id="GO:0004497">
    <property type="term" value="F:monooxygenase activity"/>
    <property type="evidence" value="ECO:0007669"/>
    <property type="project" value="UniProtKB-KW"/>
</dbReference>
<dbReference type="GO" id="GO:0017000">
    <property type="term" value="P:antibiotic biosynthetic process"/>
    <property type="evidence" value="ECO:0007669"/>
    <property type="project" value="UniProtKB-KW"/>
</dbReference>
<dbReference type="Gene3D" id="3.60.130.10">
    <property type="entry name" value="Clavaminate synthase-like"/>
    <property type="match status" value="1"/>
</dbReference>
<dbReference type="InterPro" id="IPR050411">
    <property type="entry name" value="AlphaKG_dependent_hydroxylases"/>
</dbReference>
<dbReference type="InterPro" id="IPR042098">
    <property type="entry name" value="TauD-like_sf"/>
</dbReference>
<dbReference type="InterPro" id="IPR003819">
    <property type="entry name" value="TauD/TfdA-like"/>
</dbReference>
<dbReference type="PANTHER" id="PTHR10696">
    <property type="entry name" value="GAMMA-BUTYROBETAINE HYDROXYLASE-RELATED"/>
    <property type="match status" value="1"/>
</dbReference>
<dbReference type="PANTHER" id="PTHR10696:SF56">
    <property type="entry name" value="TAUD_TFDA-LIKE DOMAIN-CONTAINING PROTEIN"/>
    <property type="match status" value="1"/>
</dbReference>
<dbReference type="Pfam" id="PF02668">
    <property type="entry name" value="TauD"/>
    <property type="match status" value="1"/>
</dbReference>
<dbReference type="SUPFAM" id="SSF51197">
    <property type="entry name" value="Clavaminate synthase-like"/>
    <property type="match status" value="1"/>
</dbReference>
<sequence>MVEILKKPVTGRSVWQRAQVEDASQWTYVLDEGMRAEILEAAERINEQGLTVWDLDRKAVPLERAGKLVAQCVEQLEHGFGLAMLRGVPTEGLTVAESQVVMGVVGLHLGTAVAQNGHGDRVVSIRDYGKGRLNSKTIRGYQTNESLPWHSDAPDIAALLCLTQAKHGGEFHVASAMHIYNTLLQEAPELLGLYYAGVFFDYRGEEPPGEPPAYRNAIFGYHNGQLSCRYFLRNFADSGTAKLGFEQPEVEKLALDTFEEIASRPENHVSMRLEPGDMQLVDDNVTVHRRGAYSDEEDGSTDSSRHLLRLWINVENGRQFPTSLSTHRWGMKAAAKPTH</sequence>
<evidence type="ECO:0000269" key="1">
    <source>
    </source>
</evidence>
<evidence type="ECO:0000269" key="2">
    <source>
    </source>
</evidence>
<evidence type="ECO:0000303" key="3">
    <source>
    </source>
</evidence>
<evidence type="ECO:0000305" key="4"/>
<evidence type="ECO:0000305" key="5">
    <source>
    </source>
</evidence>
<evidence type="ECO:0000312" key="6">
    <source>
        <dbReference type="EMBL" id="KJS60110.1"/>
    </source>
</evidence>
<evidence type="ECO:0007744" key="7">
    <source>
        <dbReference type="PDB" id="5EQN"/>
    </source>
</evidence>
<evidence type="ECO:0007829" key="8">
    <source>
        <dbReference type="PDB" id="5EQN"/>
    </source>
</evidence>
<name>FRBJ_STRR3</name>
<keyword id="KW-0002">3D-structure</keyword>
<keyword id="KW-0045">Antibiotic biosynthesis</keyword>
<keyword id="KW-0408">Iron</keyword>
<keyword id="KW-0479">Metal-binding</keyword>
<keyword id="KW-0503">Monooxygenase</keyword>
<keyword id="KW-0560">Oxidoreductase</keyword>
<keyword id="KW-1185">Reference proteome</keyword>